<evidence type="ECO:0000255" key="1">
    <source>
        <dbReference type="HAMAP-Rule" id="MF_00504"/>
    </source>
</evidence>
<sequence>MTEAMKITLSTQPADGRWGEKATWSINNDGIALHLNGKDDLGLIQRAARKIDGMGIKHVALSGEGWNTDRAWAFWAGYKGPKGQRQVEWPSLDDAQRSELDNRLTIIDWVRDTINAPAEELGPEQLAQRAVDLLCGVAGEKISYRITKGEDLREQGYLGLHTVGRGSERPPVLLALDYNPTGDKEAPVYACLVGKGITFDSGGYSIKQSAFMDSMKSDMGGAATITGALAFAITRGLNKRVKLYLCCADNLISGNAFKLGDIIHYRNGKTVEVMNTDAEGRLVLADGLIDASAQKPELIIDAATLTGAAKTALGNDYHALFSFDDALANRLLASAQAENEAFWRLPLAEFHRNQLPSNFADLNNTGSAAYPAGASTAAGFLSHFVENYHQGWLHIDCSATYRKSAVEQWSAGATGLGVRTIANLLTAE</sequence>
<reference key="1">
    <citation type="submission" date="2006-09" db="EMBL/GenBank/DDBJ databases">
        <authorList>
            <consortium name="The Klebsiella pneumonia Genome Sequencing Project"/>
            <person name="McClelland M."/>
            <person name="Sanderson E.K."/>
            <person name="Spieth J."/>
            <person name="Clifton W.S."/>
            <person name="Latreille P."/>
            <person name="Sabo A."/>
            <person name="Pepin K."/>
            <person name="Bhonagiri V."/>
            <person name="Porwollik S."/>
            <person name="Ali J."/>
            <person name="Wilson R.K."/>
        </authorList>
    </citation>
    <scope>NUCLEOTIDE SEQUENCE [LARGE SCALE GENOMIC DNA]</scope>
    <source>
        <strain>ATCC 700721 / MGH 78578</strain>
    </source>
</reference>
<protein>
    <recommendedName>
        <fullName evidence="1">Peptidase B</fullName>
        <ecNumber evidence="1">3.4.11.23</ecNumber>
    </recommendedName>
    <alternativeName>
        <fullName evidence="1">Aminopeptidase B</fullName>
    </alternativeName>
</protein>
<comment type="function">
    <text evidence="1">Probably plays an important role in intracellular peptide degradation.</text>
</comment>
<comment type="catalytic activity">
    <reaction evidence="1">
        <text>Release of an N-terminal amino acid, Xaa, from a peptide or arylamide. Xaa is preferably Glu or Asp but may be other amino acids, including Leu, Met, His, Cys and Gln.</text>
        <dbReference type="EC" id="3.4.11.23"/>
    </reaction>
</comment>
<comment type="cofactor">
    <cofactor evidence="1">
        <name>Mn(2+)</name>
        <dbReference type="ChEBI" id="CHEBI:29035"/>
    </cofactor>
    <text evidence="1">Binds 2 manganese ions per subunit.</text>
</comment>
<comment type="subunit">
    <text evidence="1">Homohexamer.</text>
</comment>
<comment type="subcellular location">
    <subcellularLocation>
        <location evidence="1">Cytoplasm</location>
    </subcellularLocation>
</comment>
<comment type="similarity">
    <text evidence="1">Belongs to the peptidase M17 family.</text>
</comment>
<keyword id="KW-0031">Aminopeptidase</keyword>
<keyword id="KW-0963">Cytoplasm</keyword>
<keyword id="KW-0378">Hydrolase</keyword>
<keyword id="KW-0464">Manganese</keyword>
<keyword id="KW-0479">Metal-binding</keyword>
<keyword id="KW-0645">Protease</keyword>
<accession>A6TCE4</accession>
<proteinExistence type="inferred from homology"/>
<feature type="chain" id="PRO_1000014890" description="Peptidase B">
    <location>
        <begin position="1"/>
        <end position="428"/>
    </location>
</feature>
<feature type="active site" evidence="1">
    <location>
        <position position="207"/>
    </location>
</feature>
<feature type="active site" evidence="1">
    <location>
        <position position="281"/>
    </location>
</feature>
<feature type="binding site" evidence="1">
    <location>
        <position position="195"/>
    </location>
    <ligand>
        <name>Mn(2+)</name>
        <dbReference type="ChEBI" id="CHEBI:29035"/>
        <label>2</label>
    </ligand>
</feature>
<feature type="binding site" evidence="1">
    <location>
        <position position="200"/>
    </location>
    <ligand>
        <name>Mn(2+)</name>
        <dbReference type="ChEBI" id="CHEBI:29035"/>
        <label>1</label>
    </ligand>
</feature>
<feature type="binding site" evidence="1">
    <location>
        <position position="200"/>
    </location>
    <ligand>
        <name>Mn(2+)</name>
        <dbReference type="ChEBI" id="CHEBI:29035"/>
        <label>2</label>
    </ligand>
</feature>
<feature type="binding site" evidence="1">
    <location>
        <position position="218"/>
    </location>
    <ligand>
        <name>Mn(2+)</name>
        <dbReference type="ChEBI" id="CHEBI:29035"/>
        <label>2</label>
    </ligand>
</feature>
<feature type="binding site" evidence="1">
    <location>
        <position position="277"/>
    </location>
    <ligand>
        <name>Mn(2+)</name>
        <dbReference type="ChEBI" id="CHEBI:29035"/>
        <label>1</label>
    </ligand>
</feature>
<feature type="binding site" evidence="1">
    <location>
        <position position="279"/>
    </location>
    <ligand>
        <name>Mn(2+)</name>
        <dbReference type="ChEBI" id="CHEBI:29035"/>
        <label>1</label>
    </ligand>
</feature>
<feature type="binding site" evidence="1">
    <location>
        <position position="279"/>
    </location>
    <ligand>
        <name>Mn(2+)</name>
        <dbReference type="ChEBI" id="CHEBI:29035"/>
        <label>2</label>
    </ligand>
</feature>
<dbReference type="EC" id="3.4.11.23" evidence="1"/>
<dbReference type="EMBL" id="CP000647">
    <property type="protein sequence ID" value="ABR78265.1"/>
    <property type="molecule type" value="Genomic_DNA"/>
</dbReference>
<dbReference type="RefSeq" id="WP_002913953.1">
    <property type="nucleotide sequence ID" value="NC_009648.1"/>
</dbReference>
<dbReference type="SMR" id="A6TCE4"/>
<dbReference type="STRING" id="272620.KPN_02855"/>
<dbReference type="MEROPS" id="M17.004"/>
<dbReference type="jPOST" id="A6TCE4"/>
<dbReference type="PaxDb" id="272620-KPN_02855"/>
<dbReference type="EnsemblBacteria" id="ABR78265">
    <property type="protein sequence ID" value="ABR78265"/>
    <property type="gene ID" value="KPN_02855"/>
</dbReference>
<dbReference type="KEGG" id="kpn:KPN_02855"/>
<dbReference type="HOGENOM" id="CLU_013734_7_1_6"/>
<dbReference type="Proteomes" id="UP000000265">
    <property type="component" value="Chromosome"/>
</dbReference>
<dbReference type="GO" id="GO:0005737">
    <property type="term" value="C:cytoplasm"/>
    <property type="evidence" value="ECO:0007669"/>
    <property type="project" value="UniProtKB-SubCell"/>
</dbReference>
<dbReference type="GO" id="GO:0030145">
    <property type="term" value="F:manganese ion binding"/>
    <property type="evidence" value="ECO:0007669"/>
    <property type="project" value="UniProtKB-UniRule"/>
</dbReference>
<dbReference type="GO" id="GO:0070006">
    <property type="term" value="F:metalloaminopeptidase activity"/>
    <property type="evidence" value="ECO:0007669"/>
    <property type="project" value="InterPro"/>
</dbReference>
<dbReference type="GO" id="GO:0006508">
    <property type="term" value="P:proteolysis"/>
    <property type="evidence" value="ECO:0007669"/>
    <property type="project" value="UniProtKB-UniRule"/>
</dbReference>
<dbReference type="CDD" id="cd00433">
    <property type="entry name" value="Peptidase_M17"/>
    <property type="match status" value="1"/>
</dbReference>
<dbReference type="FunFam" id="3.40.630.10:FF:000037">
    <property type="entry name" value="Peptidase B"/>
    <property type="match status" value="1"/>
</dbReference>
<dbReference type="Gene3D" id="3.40.630.10">
    <property type="entry name" value="Zn peptidases"/>
    <property type="match status" value="1"/>
</dbReference>
<dbReference type="HAMAP" id="MF_00504">
    <property type="entry name" value="Aminopeptidase_M17"/>
    <property type="match status" value="1"/>
</dbReference>
<dbReference type="InterPro" id="IPR011356">
    <property type="entry name" value="Leucine_aapep/pepB"/>
</dbReference>
<dbReference type="InterPro" id="IPR047620">
    <property type="entry name" value="M17_PepB-like_N"/>
</dbReference>
<dbReference type="InterPro" id="IPR008330">
    <property type="entry name" value="Pept_M17_PepB"/>
</dbReference>
<dbReference type="InterPro" id="IPR000819">
    <property type="entry name" value="Peptidase_M17_C"/>
</dbReference>
<dbReference type="NCBIfam" id="NF003450">
    <property type="entry name" value="PRK05015.1"/>
    <property type="match status" value="1"/>
</dbReference>
<dbReference type="PANTHER" id="PTHR11963">
    <property type="entry name" value="LEUCINE AMINOPEPTIDASE-RELATED"/>
    <property type="match status" value="1"/>
</dbReference>
<dbReference type="PANTHER" id="PTHR11963:SF20">
    <property type="entry name" value="PEPTIDASE B"/>
    <property type="match status" value="1"/>
</dbReference>
<dbReference type="Pfam" id="PF12404">
    <property type="entry name" value="DUF3663"/>
    <property type="match status" value="1"/>
</dbReference>
<dbReference type="Pfam" id="PF00883">
    <property type="entry name" value="Peptidase_M17"/>
    <property type="match status" value="1"/>
</dbReference>
<dbReference type="PIRSF" id="PIRSF036388">
    <property type="entry name" value="Ctsl_amnpptdse_B"/>
    <property type="match status" value="1"/>
</dbReference>
<dbReference type="PRINTS" id="PR00481">
    <property type="entry name" value="LAMNOPPTDASE"/>
</dbReference>
<dbReference type="SUPFAM" id="SSF53187">
    <property type="entry name" value="Zn-dependent exopeptidases"/>
    <property type="match status" value="1"/>
</dbReference>
<dbReference type="PROSITE" id="PS00631">
    <property type="entry name" value="CYTOSOL_AP"/>
    <property type="match status" value="1"/>
</dbReference>
<name>PEPB_KLEP7</name>
<organism>
    <name type="scientific">Klebsiella pneumoniae subsp. pneumoniae (strain ATCC 700721 / MGH 78578)</name>
    <dbReference type="NCBI Taxonomy" id="272620"/>
    <lineage>
        <taxon>Bacteria</taxon>
        <taxon>Pseudomonadati</taxon>
        <taxon>Pseudomonadota</taxon>
        <taxon>Gammaproteobacteria</taxon>
        <taxon>Enterobacterales</taxon>
        <taxon>Enterobacteriaceae</taxon>
        <taxon>Klebsiella/Raoultella group</taxon>
        <taxon>Klebsiella</taxon>
        <taxon>Klebsiella pneumoniae complex</taxon>
    </lineage>
</organism>
<gene>
    <name evidence="1" type="primary">pepB</name>
    <name type="ordered locus">KPN78578_28040</name>
    <name type="ORF">KPN_02855</name>
</gene>